<accession>P60499</accession>
<sequence length="525" mass="56255">MTQQTSQKHNPVLVVDFGAQYAQLIARRVREANIYSEVVPHTATVEEIKAKNPAALILSGGPSSVYADGAPSLDPQVLELGIPVFGICYGFQAMTHALGGTVANTGNREYGRTEMTVDGGILHADLEETHKVWMSHGDAVSVAPEGFVVTAHSEGAPVAAFECAEKRMAGVQYHPEVLHSPHGQEVMVRFLTEIAGLEQNWTAANIAEELIDAVCAQVGPEGRAICGLSGGVDSAVAAALVQRAIGDRLTCVFVDHGLLRAGEREQVQTDFVAATGAKLVTVDEREAFLNKLAGVTEPEAKRKAIGAEFIRSFERAVAGILDDAPEGSTVDFLVQGTLYPDVVESGGGSGTANIKSHHNVGGLPDDVEFQLVEPLRLLFKDEVRAVGRELGLPEEIVNRQPFPGPGLGIRIIGEVTEERLETLRAADLIARTELTAAGLDSEIWQCPVVLLADVRSVGVQGDGRTYGHPIVLRPVSSEDAMTADWTRLPYDVLEKISTRITNEVSDVNRVVLDCTSKPPGTIEWE</sequence>
<dbReference type="EC" id="6.3.5.2" evidence="1"/>
<dbReference type="EMBL" id="BX248355">
    <property type="protein sequence ID" value="CAE49112.1"/>
    <property type="molecule type" value="Genomic_DNA"/>
</dbReference>
<dbReference type="RefSeq" id="WP_010934406.1">
    <property type="nucleotide sequence ID" value="NC_002935.2"/>
</dbReference>
<dbReference type="SMR" id="P60499"/>
<dbReference type="STRING" id="257309.DIP0595"/>
<dbReference type="MEROPS" id="C26.A07"/>
<dbReference type="KEGG" id="cdi:DIP0595"/>
<dbReference type="HOGENOM" id="CLU_014340_0_5_11"/>
<dbReference type="UniPathway" id="UPA00189">
    <property type="reaction ID" value="UER00296"/>
</dbReference>
<dbReference type="Proteomes" id="UP000002198">
    <property type="component" value="Chromosome"/>
</dbReference>
<dbReference type="GO" id="GO:0005829">
    <property type="term" value="C:cytosol"/>
    <property type="evidence" value="ECO:0007669"/>
    <property type="project" value="TreeGrafter"/>
</dbReference>
<dbReference type="GO" id="GO:0005524">
    <property type="term" value="F:ATP binding"/>
    <property type="evidence" value="ECO:0007669"/>
    <property type="project" value="UniProtKB-UniRule"/>
</dbReference>
<dbReference type="GO" id="GO:0003921">
    <property type="term" value="F:GMP synthase activity"/>
    <property type="evidence" value="ECO:0007669"/>
    <property type="project" value="InterPro"/>
</dbReference>
<dbReference type="CDD" id="cd01742">
    <property type="entry name" value="GATase1_GMP_Synthase"/>
    <property type="match status" value="1"/>
</dbReference>
<dbReference type="CDD" id="cd01997">
    <property type="entry name" value="GMP_synthase_C"/>
    <property type="match status" value="1"/>
</dbReference>
<dbReference type="FunFam" id="3.30.300.10:FF:000002">
    <property type="entry name" value="GMP synthase [glutamine-hydrolyzing]"/>
    <property type="match status" value="1"/>
</dbReference>
<dbReference type="FunFam" id="3.40.50.620:FF:000001">
    <property type="entry name" value="GMP synthase [glutamine-hydrolyzing]"/>
    <property type="match status" value="1"/>
</dbReference>
<dbReference type="FunFam" id="3.40.50.880:FF:000001">
    <property type="entry name" value="GMP synthase [glutamine-hydrolyzing]"/>
    <property type="match status" value="1"/>
</dbReference>
<dbReference type="Gene3D" id="3.30.300.10">
    <property type="match status" value="1"/>
</dbReference>
<dbReference type="Gene3D" id="3.40.50.880">
    <property type="match status" value="1"/>
</dbReference>
<dbReference type="Gene3D" id="3.40.50.620">
    <property type="entry name" value="HUPs"/>
    <property type="match status" value="1"/>
</dbReference>
<dbReference type="HAMAP" id="MF_00344">
    <property type="entry name" value="GMP_synthase"/>
    <property type="match status" value="1"/>
</dbReference>
<dbReference type="InterPro" id="IPR029062">
    <property type="entry name" value="Class_I_gatase-like"/>
</dbReference>
<dbReference type="InterPro" id="IPR017926">
    <property type="entry name" value="GATASE"/>
</dbReference>
<dbReference type="InterPro" id="IPR001674">
    <property type="entry name" value="GMP_synth_C"/>
</dbReference>
<dbReference type="InterPro" id="IPR004739">
    <property type="entry name" value="GMP_synth_GATase"/>
</dbReference>
<dbReference type="InterPro" id="IPR022955">
    <property type="entry name" value="GMP_synthase"/>
</dbReference>
<dbReference type="InterPro" id="IPR025777">
    <property type="entry name" value="GMPS_ATP_PPase_dom"/>
</dbReference>
<dbReference type="InterPro" id="IPR022310">
    <property type="entry name" value="NAD/GMP_synthase"/>
</dbReference>
<dbReference type="InterPro" id="IPR014729">
    <property type="entry name" value="Rossmann-like_a/b/a_fold"/>
</dbReference>
<dbReference type="NCBIfam" id="TIGR00884">
    <property type="entry name" value="guaA_Cterm"/>
    <property type="match status" value="1"/>
</dbReference>
<dbReference type="NCBIfam" id="TIGR00888">
    <property type="entry name" value="guaA_Nterm"/>
    <property type="match status" value="1"/>
</dbReference>
<dbReference type="NCBIfam" id="NF000848">
    <property type="entry name" value="PRK00074.1"/>
    <property type="match status" value="1"/>
</dbReference>
<dbReference type="PANTHER" id="PTHR11922:SF2">
    <property type="entry name" value="GMP SYNTHASE [GLUTAMINE-HYDROLYZING]"/>
    <property type="match status" value="1"/>
</dbReference>
<dbReference type="PANTHER" id="PTHR11922">
    <property type="entry name" value="GMP SYNTHASE-RELATED"/>
    <property type="match status" value="1"/>
</dbReference>
<dbReference type="Pfam" id="PF00117">
    <property type="entry name" value="GATase"/>
    <property type="match status" value="1"/>
</dbReference>
<dbReference type="Pfam" id="PF00958">
    <property type="entry name" value="GMP_synt_C"/>
    <property type="match status" value="1"/>
</dbReference>
<dbReference type="Pfam" id="PF02540">
    <property type="entry name" value="NAD_synthase"/>
    <property type="match status" value="1"/>
</dbReference>
<dbReference type="PRINTS" id="PR00097">
    <property type="entry name" value="ANTSNTHASEII"/>
</dbReference>
<dbReference type="PRINTS" id="PR00099">
    <property type="entry name" value="CPSGATASE"/>
</dbReference>
<dbReference type="PRINTS" id="PR00096">
    <property type="entry name" value="GATASE"/>
</dbReference>
<dbReference type="SUPFAM" id="SSF52402">
    <property type="entry name" value="Adenine nucleotide alpha hydrolases-like"/>
    <property type="match status" value="1"/>
</dbReference>
<dbReference type="SUPFAM" id="SSF52317">
    <property type="entry name" value="Class I glutamine amidotransferase-like"/>
    <property type="match status" value="1"/>
</dbReference>
<dbReference type="SUPFAM" id="SSF54810">
    <property type="entry name" value="GMP synthetase C-terminal dimerisation domain"/>
    <property type="match status" value="1"/>
</dbReference>
<dbReference type="PROSITE" id="PS51273">
    <property type="entry name" value="GATASE_TYPE_1"/>
    <property type="match status" value="1"/>
</dbReference>
<dbReference type="PROSITE" id="PS51553">
    <property type="entry name" value="GMPS_ATP_PPASE"/>
    <property type="match status" value="1"/>
</dbReference>
<gene>
    <name evidence="1" type="primary">guaA</name>
    <name type="ordered locus">DIP0595</name>
</gene>
<keyword id="KW-0067">ATP-binding</keyword>
<keyword id="KW-0315">Glutamine amidotransferase</keyword>
<keyword id="KW-0332">GMP biosynthesis</keyword>
<keyword id="KW-0436">Ligase</keyword>
<keyword id="KW-0547">Nucleotide-binding</keyword>
<keyword id="KW-0658">Purine biosynthesis</keyword>
<keyword id="KW-1185">Reference proteome</keyword>
<name>GUAA_CORDI</name>
<protein>
    <recommendedName>
        <fullName evidence="1">GMP synthase [glutamine-hydrolyzing]</fullName>
        <ecNumber evidence="1">6.3.5.2</ecNumber>
    </recommendedName>
    <alternativeName>
        <fullName evidence="1">GMP synthetase</fullName>
    </alternativeName>
    <alternativeName>
        <fullName evidence="1">Glutamine amidotransferase</fullName>
    </alternativeName>
</protein>
<feature type="chain" id="PRO_0000140117" description="GMP synthase [glutamine-hydrolyzing]">
    <location>
        <begin position="1"/>
        <end position="525"/>
    </location>
</feature>
<feature type="domain" description="Glutamine amidotransferase type-1" evidence="1">
    <location>
        <begin position="11"/>
        <end position="200"/>
    </location>
</feature>
<feature type="domain" description="GMPS ATP-PPase" evidence="1">
    <location>
        <begin position="201"/>
        <end position="399"/>
    </location>
</feature>
<feature type="active site" description="Nucleophile" evidence="1">
    <location>
        <position position="88"/>
    </location>
</feature>
<feature type="active site" evidence="1">
    <location>
        <position position="174"/>
    </location>
</feature>
<feature type="active site" evidence="1">
    <location>
        <position position="176"/>
    </location>
</feature>
<feature type="binding site" evidence="1">
    <location>
        <begin position="229"/>
        <end position="235"/>
    </location>
    <ligand>
        <name>ATP</name>
        <dbReference type="ChEBI" id="CHEBI:30616"/>
    </ligand>
</feature>
<evidence type="ECO:0000255" key="1">
    <source>
        <dbReference type="HAMAP-Rule" id="MF_00344"/>
    </source>
</evidence>
<comment type="function">
    <text evidence="1">Catalyzes the synthesis of GMP from XMP.</text>
</comment>
<comment type="catalytic activity">
    <reaction evidence="1">
        <text>XMP + L-glutamine + ATP + H2O = GMP + L-glutamate + AMP + diphosphate + 2 H(+)</text>
        <dbReference type="Rhea" id="RHEA:11680"/>
        <dbReference type="ChEBI" id="CHEBI:15377"/>
        <dbReference type="ChEBI" id="CHEBI:15378"/>
        <dbReference type="ChEBI" id="CHEBI:29985"/>
        <dbReference type="ChEBI" id="CHEBI:30616"/>
        <dbReference type="ChEBI" id="CHEBI:33019"/>
        <dbReference type="ChEBI" id="CHEBI:57464"/>
        <dbReference type="ChEBI" id="CHEBI:58115"/>
        <dbReference type="ChEBI" id="CHEBI:58359"/>
        <dbReference type="ChEBI" id="CHEBI:456215"/>
        <dbReference type="EC" id="6.3.5.2"/>
    </reaction>
</comment>
<comment type="pathway">
    <text evidence="1">Purine metabolism; GMP biosynthesis; GMP from XMP (L-Gln route): step 1/1.</text>
</comment>
<comment type="subunit">
    <text evidence="1">Homodimer.</text>
</comment>
<proteinExistence type="inferred from homology"/>
<organism>
    <name type="scientific">Corynebacterium diphtheriae (strain ATCC 700971 / NCTC 13129 / Biotype gravis)</name>
    <dbReference type="NCBI Taxonomy" id="257309"/>
    <lineage>
        <taxon>Bacteria</taxon>
        <taxon>Bacillati</taxon>
        <taxon>Actinomycetota</taxon>
        <taxon>Actinomycetes</taxon>
        <taxon>Mycobacteriales</taxon>
        <taxon>Corynebacteriaceae</taxon>
        <taxon>Corynebacterium</taxon>
    </lineage>
</organism>
<reference key="1">
    <citation type="journal article" date="2003" name="Nucleic Acids Res.">
        <title>The complete genome sequence and analysis of Corynebacterium diphtheriae NCTC13129.</title>
        <authorList>
            <person name="Cerdeno-Tarraga A.-M."/>
            <person name="Efstratiou A."/>
            <person name="Dover L.G."/>
            <person name="Holden M.T.G."/>
            <person name="Pallen M.J."/>
            <person name="Bentley S.D."/>
            <person name="Besra G.S."/>
            <person name="Churcher C.M."/>
            <person name="James K.D."/>
            <person name="De Zoysa A."/>
            <person name="Chillingworth T."/>
            <person name="Cronin A."/>
            <person name="Dowd L."/>
            <person name="Feltwell T."/>
            <person name="Hamlin N."/>
            <person name="Holroyd S."/>
            <person name="Jagels K."/>
            <person name="Moule S."/>
            <person name="Quail M.A."/>
            <person name="Rabbinowitsch E."/>
            <person name="Rutherford K.M."/>
            <person name="Thomson N.R."/>
            <person name="Unwin L."/>
            <person name="Whitehead S."/>
            <person name="Barrell B.G."/>
            <person name="Parkhill J."/>
        </authorList>
    </citation>
    <scope>NUCLEOTIDE SEQUENCE [LARGE SCALE GENOMIC DNA]</scope>
    <source>
        <strain>ATCC 700971 / NCTC 13129 / Biotype gravis</strain>
    </source>
</reference>